<dbReference type="EMBL" id="AE017244">
    <property type="protein sequence ID" value="AAZ53426.2"/>
    <property type="molecule type" value="Genomic_DNA"/>
</dbReference>
<dbReference type="RefSeq" id="WP_044272682.1">
    <property type="nucleotide sequence ID" value="NC_007332.1"/>
</dbReference>
<dbReference type="SMR" id="Q4A8W3"/>
<dbReference type="KEGG" id="mhp:MHP7448_0049"/>
<dbReference type="HOGENOM" id="CLU_079215_4_3_14"/>
<dbReference type="Proteomes" id="UP000000553">
    <property type="component" value="Chromosome"/>
</dbReference>
<dbReference type="GO" id="GO:0005886">
    <property type="term" value="C:plasma membrane"/>
    <property type="evidence" value="ECO:0007669"/>
    <property type="project" value="UniProtKB-SubCell"/>
</dbReference>
<dbReference type="GO" id="GO:0045259">
    <property type="term" value="C:proton-transporting ATP synthase complex"/>
    <property type="evidence" value="ECO:0007669"/>
    <property type="project" value="UniProtKB-KW"/>
</dbReference>
<dbReference type="GO" id="GO:0046933">
    <property type="term" value="F:proton-transporting ATP synthase activity, rotational mechanism"/>
    <property type="evidence" value="ECO:0007669"/>
    <property type="project" value="UniProtKB-UniRule"/>
</dbReference>
<dbReference type="GO" id="GO:0046961">
    <property type="term" value="F:proton-transporting ATPase activity, rotational mechanism"/>
    <property type="evidence" value="ECO:0007669"/>
    <property type="project" value="TreeGrafter"/>
</dbReference>
<dbReference type="CDD" id="cd06503">
    <property type="entry name" value="ATP-synt_Fo_b"/>
    <property type="match status" value="1"/>
</dbReference>
<dbReference type="HAMAP" id="MF_01398">
    <property type="entry name" value="ATP_synth_b_bprime"/>
    <property type="match status" value="1"/>
</dbReference>
<dbReference type="InterPro" id="IPR002146">
    <property type="entry name" value="ATP_synth_b/b'su_bac/chlpt"/>
</dbReference>
<dbReference type="InterPro" id="IPR050059">
    <property type="entry name" value="ATP_synthase_B_chain"/>
</dbReference>
<dbReference type="PANTHER" id="PTHR33445">
    <property type="entry name" value="ATP SYNTHASE SUBUNIT B', CHLOROPLASTIC"/>
    <property type="match status" value="1"/>
</dbReference>
<dbReference type="PANTHER" id="PTHR33445:SF2">
    <property type="entry name" value="ATP SYNTHASE SUBUNIT B', CHLOROPLASTIC"/>
    <property type="match status" value="1"/>
</dbReference>
<dbReference type="Pfam" id="PF00430">
    <property type="entry name" value="ATP-synt_B"/>
    <property type="match status" value="1"/>
</dbReference>
<sequence length="188" mass="22087">MVNLNQSLGDLFKGIIPNVYVLGATIVSFLVLFLFITYFVYRPLKKYIKKRKDFLQNHIDLTIKSNVEAEKLEKKSQQKLLETKEFCIELKEKSQIEANKFLEDAKKTAIDNARQLINEGQKVLLEYENEIKSKYYMNVINVAVEICQKYLEKQDKNNKILQQSLIADLEKELRKRENSSKKKDNFGK</sequence>
<comment type="function">
    <text evidence="1">F(1)F(0) ATP synthase produces ATP from ADP in the presence of a proton or sodium gradient. F-type ATPases consist of two structural domains, F(1) containing the extramembraneous catalytic core and F(0) containing the membrane proton channel, linked together by a central stalk and a peripheral stalk. During catalysis, ATP synthesis in the catalytic domain of F(1) is coupled via a rotary mechanism of the central stalk subunits to proton translocation.</text>
</comment>
<comment type="function">
    <text evidence="1">Component of the F(0) channel, it forms part of the peripheral stalk, linking F(1) to F(0).</text>
</comment>
<comment type="subunit">
    <text evidence="1">F-type ATPases have 2 components, F(1) - the catalytic core - and F(0) - the membrane proton channel. F(1) has five subunits: alpha(3), beta(3), gamma(1), delta(1), epsilon(1). F(0) has three main subunits: a(1), b(2) and c(10-14). The alpha and beta chains form an alternating ring which encloses part of the gamma chain. F(1) is attached to F(0) by a central stalk formed by the gamma and epsilon chains, while a peripheral stalk is formed by the delta and b chains.</text>
</comment>
<comment type="subcellular location">
    <subcellularLocation>
        <location evidence="1">Cell membrane</location>
        <topology evidence="1">Single-pass membrane protein</topology>
    </subcellularLocation>
</comment>
<comment type="similarity">
    <text evidence="1">Belongs to the ATPase B chain family.</text>
</comment>
<feature type="chain" id="PRO_0000368610" description="ATP synthase subunit b">
    <location>
        <begin position="1"/>
        <end position="188"/>
    </location>
</feature>
<feature type="transmembrane region" description="Helical" evidence="1">
    <location>
        <begin position="19"/>
        <end position="39"/>
    </location>
</feature>
<name>ATPF_MESH7</name>
<organism>
    <name type="scientific">Mesomycoplasma hyopneumoniae (strain 7448)</name>
    <name type="common">Mycoplasma hyopneumoniae</name>
    <dbReference type="NCBI Taxonomy" id="262722"/>
    <lineage>
        <taxon>Bacteria</taxon>
        <taxon>Bacillati</taxon>
        <taxon>Mycoplasmatota</taxon>
        <taxon>Mycoplasmoidales</taxon>
        <taxon>Metamycoplasmataceae</taxon>
        <taxon>Mesomycoplasma</taxon>
    </lineage>
</organism>
<proteinExistence type="inferred from homology"/>
<accession>Q4A8W3</accession>
<reference key="1">
    <citation type="journal article" date="2005" name="J. Bacteriol.">
        <title>Swine and poultry pathogens: the complete genome sequences of two strains of Mycoplasma hyopneumoniae and a strain of Mycoplasma synoviae.</title>
        <authorList>
            <person name="Vasconcelos A.T.R."/>
            <person name="Ferreira H.B."/>
            <person name="Bizarro C.V."/>
            <person name="Bonatto S.L."/>
            <person name="Carvalho M.O."/>
            <person name="Pinto P.M."/>
            <person name="Almeida D.F."/>
            <person name="Almeida L.G.P."/>
            <person name="Almeida R."/>
            <person name="Alves-Junior L."/>
            <person name="Assuncao E.N."/>
            <person name="Azevedo V.A.C."/>
            <person name="Bogo M.R."/>
            <person name="Brigido M.M."/>
            <person name="Brocchi M."/>
            <person name="Burity H.A."/>
            <person name="Camargo A.A."/>
            <person name="Camargo S.S."/>
            <person name="Carepo M.S."/>
            <person name="Carraro D.M."/>
            <person name="de Mattos Cascardo J.C."/>
            <person name="Castro L.A."/>
            <person name="Cavalcanti G."/>
            <person name="Chemale G."/>
            <person name="Collevatti R.G."/>
            <person name="Cunha C.W."/>
            <person name="Dallagiovanna B."/>
            <person name="Dambros B.P."/>
            <person name="Dellagostin O.A."/>
            <person name="Falcao C."/>
            <person name="Fantinatti-Garboggini F."/>
            <person name="Felipe M.S.S."/>
            <person name="Fiorentin L."/>
            <person name="Franco G.R."/>
            <person name="Freitas N.S.A."/>
            <person name="Frias D."/>
            <person name="Grangeiro T.B."/>
            <person name="Grisard E.C."/>
            <person name="Guimaraes C.T."/>
            <person name="Hungria M."/>
            <person name="Jardim S.N."/>
            <person name="Krieger M.A."/>
            <person name="Laurino J.P."/>
            <person name="Lima L.F.A."/>
            <person name="Lopes M.I."/>
            <person name="Loreto E.L.S."/>
            <person name="Madeira H.M.F."/>
            <person name="Manfio G.P."/>
            <person name="Maranhao A.Q."/>
            <person name="Martinkovics C.T."/>
            <person name="Medeiros S.R.B."/>
            <person name="Moreira M.A.M."/>
            <person name="Neiva M."/>
            <person name="Ramalho-Neto C.E."/>
            <person name="Nicolas M.F."/>
            <person name="Oliveira S.C."/>
            <person name="Paixao R.F.C."/>
            <person name="Pedrosa F.O."/>
            <person name="Pena S.D.J."/>
            <person name="Pereira M."/>
            <person name="Pereira-Ferrari L."/>
            <person name="Piffer I."/>
            <person name="Pinto L.S."/>
            <person name="Potrich D.P."/>
            <person name="Salim A.C.M."/>
            <person name="Santos F.R."/>
            <person name="Schmitt R."/>
            <person name="Schneider M.P.C."/>
            <person name="Schrank A."/>
            <person name="Schrank I.S."/>
            <person name="Schuck A.F."/>
            <person name="Seuanez H.N."/>
            <person name="Silva D.W."/>
            <person name="Silva R."/>
            <person name="Silva S.C."/>
            <person name="Soares C.M.A."/>
            <person name="Souza K.R.L."/>
            <person name="Souza R.C."/>
            <person name="Staats C.C."/>
            <person name="Steffens M.B.R."/>
            <person name="Teixeira S.M.R."/>
            <person name="Urmenyi T.P."/>
            <person name="Vainstein M.H."/>
            <person name="Zuccherato L.W."/>
            <person name="Simpson A.J.G."/>
            <person name="Zaha A."/>
        </authorList>
    </citation>
    <scope>NUCLEOTIDE SEQUENCE [LARGE SCALE GENOMIC DNA]</scope>
    <source>
        <strain>7448</strain>
    </source>
</reference>
<protein>
    <recommendedName>
        <fullName evidence="1">ATP synthase subunit b</fullName>
    </recommendedName>
    <alternativeName>
        <fullName evidence="1">ATP synthase F(0) sector subunit b</fullName>
    </alternativeName>
    <alternativeName>
        <fullName evidence="1">ATPase subunit I</fullName>
    </alternativeName>
    <alternativeName>
        <fullName evidence="1">F-type ATPase subunit b</fullName>
        <shortName evidence="1">F-ATPase subunit b</shortName>
    </alternativeName>
</protein>
<keyword id="KW-0066">ATP synthesis</keyword>
<keyword id="KW-1003">Cell membrane</keyword>
<keyword id="KW-0138">CF(0)</keyword>
<keyword id="KW-0375">Hydrogen ion transport</keyword>
<keyword id="KW-0406">Ion transport</keyword>
<keyword id="KW-0472">Membrane</keyword>
<keyword id="KW-0812">Transmembrane</keyword>
<keyword id="KW-1133">Transmembrane helix</keyword>
<keyword id="KW-0813">Transport</keyword>
<gene>
    <name evidence="1" type="primary">atpF</name>
    <name type="ordered locus">MHP7448_0049</name>
</gene>
<evidence type="ECO:0000255" key="1">
    <source>
        <dbReference type="HAMAP-Rule" id="MF_01398"/>
    </source>
</evidence>